<accession>A0A023PZE9</accession>
<proteinExistence type="uncertain"/>
<name>YI029_YEAST</name>
<gene>
    <name evidence="3" type="ordered locus">YIL029W-A</name>
</gene>
<comment type="miscellaneous">
    <text evidence="1">Partially overlaps SSM4.</text>
</comment>
<comment type="caution">
    <text evidence="2">Product of a dubious gene prediction unlikely to encode a functional protein. Because of that it is not part of the S.cerevisiae S288c complete/reference proteome set.</text>
</comment>
<evidence type="ECO:0000305" key="1"/>
<evidence type="ECO:0000305" key="2">
    <source>
    </source>
</evidence>
<evidence type="ECO:0000312" key="3">
    <source>
        <dbReference type="SGD" id="S000028788"/>
    </source>
</evidence>
<organism>
    <name type="scientific">Saccharomyces cerevisiae (strain ATCC 204508 / S288c)</name>
    <name type="common">Baker's yeast</name>
    <dbReference type="NCBI Taxonomy" id="559292"/>
    <lineage>
        <taxon>Eukaryota</taxon>
        <taxon>Fungi</taxon>
        <taxon>Dikarya</taxon>
        <taxon>Ascomycota</taxon>
        <taxon>Saccharomycotina</taxon>
        <taxon>Saccharomycetes</taxon>
        <taxon>Saccharomycetales</taxon>
        <taxon>Saccharomycetaceae</taxon>
        <taxon>Saccharomyces</taxon>
    </lineage>
</organism>
<sequence length="123" mass="13443">MSHLTSAPGFEMSIFFEATHSNRQDSCMYLIEPLHLQGWKRGLSSVASPRQIRQVAPDGASSLKVAVSVSSFATLCSSSLNLETLTSESTSMTFTLLVSLIQLVVLLAKKTVFEISNKELFLT</sequence>
<feature type="chain" id="PRO_0000431031" description="Putative uncharacterized protein YIL029W-A">
    <location>
        <begin position="1"/>
        <end position="123"/>
    </location>
</feature>
<protein>
    <recommendedName>
        <fullName evidence="1">Putative uncharacterized protein YIL029W-A</fullName>
    </recommendedName>
</protein>
<reference key="1">
    <citation type="journal article" date="1997" name="Nature">
        <title>The nucleotide sequence of Saccharomyces cerevisiae chromosome IX.</title>
        <authorList>
            <person name="Churcher C.M."/>
            <person name="Bowman S."/>
            <person name="Badcock K."/>
            <person name="Bankier A.T."/>
            <person name="Brown D."/>
            <person name="Chillingworth T."/>
            <person name="Connor R."/>
            <person name="Devlin K."/>
            <person name="Gentles S."/>
            <person name="Hamlin N."/>
            <person name="Harris D.E."/>
            <person name="Horsnell T."/>
            <person name="Hunt S."/>
            <person name="Jagels K."/>
            <person name="Jones M."/>
            <person name="Lye G."/>
            <person name="Moule S."/>
            <person name="Odell C."/>
            <person name="Pearson D."/>
            <person name="Rajandream M.A."/>
            <person name="Rice P."/>
            <person name="Rowley N."/>
            <person name="Skelton J."/>
            <person name="Smith V."/>
            <person name="Walsh S.V."/>
            <person name="Whitehead S."/>
            <person name="Barrell B.G."/>
        </authorList>
    </citation>
    <scope>NUCLEOTIDE SEQUENCE [LARGE SCALE GENOMIC DNA]</scope>
    <source>
        <strain>ATCC 204508 / S288c</strain>
    </source>
</reference>
<reference key="2">
    <citation type="journal article" date="2014" name="G3 (Bethesda)">
        <title>The reference genome sequence of Saccharomyces cerevisiae: Then and now.</title>
        <authorList>
            <person name="Engel S.R."/>
            <person name="Dietrich F.S."/>
            <person name="Fisk D.G."/>
            <person name="Binkley G."/>
            <person name="Balakrishnan R."/>
            <person name="Costanzo M.C."/>
            <person name="Dwight S.S."/>
            <person name="Hitz B.C."/>
            <person name="Karra K."/>
            <person name="Nash R.S."/>
            <person name="Weng S."/>
            <person name="Wong E.D."/>
            <person name="Lloyd P."/>
            <person name="Skrzypek M.S."/>
            <person name="Miyasato S.R."/>
            <person name="Simison M."/>
            <person name="Cherry J.M."/>
        </authorList>
    </citation>
    <scope>GENOME REANNOTATION</scope>
    <source>
        <strain>ATCC 204508 / S288c</strain>
    </source>
</reference>
<dbReference type="EMBL" id="KJ412268">
    <property type="protein sequence ID" value="AHX39311.1"/>
    <property type="molecule type" value="Genomic_DNA"/>
</dbReference>
<dbReference type="PaxDb" id="4932-YIL029W-A"/>
<dbReference type="EnsemblFungi" id="YIL029W-A_mRNA">
    <property type="protein sequence ID" value="YIL029W-A"/>
    <property type="gene ID" value="YIL029W-A"/>
</dbReference>
<dbReference type="AGR" id="SGD:S000028788"/>
<dbReference type="SGD" id="S000028788">
    <property type="gene designation" value="YIL029W-A"/>
</dbReference>
<dbReference type="HOGENOM" id="CLU_2016516_0_0_1"/>